<reference key="1">
    <citation type="journal article" date="2007" name="DNA Res.">
        <title>Complete genomic structure of the bloom-forming toxic cyanobacterium Microcystis aeruginosa NIES-843.</title>
        <authorList>
            <person name="Kaneko T."/>
            <person name="Nakajima N."/>
            <person name="Okamoto S."/>
            <person name="Suzuki I."/>
            <person name="Tanabe Y."/>
            <person name="Tamaoki M."/>
            <person name="Nakamura Y."/>
            <person name="Kasai F."/>
            <person name="Watanabe A."/>
            <person name="Kawashima K."/>
            <person name="Kishida Y."/>
            <person name="Ono A."/>
            <person name="Shimizu Y."/>
            <person name="Takahashi C."/>
            <person name="Minami C."/>
            <person name="Fujishiro T."/>
            <person name="Kohara M."/>
            <person name="Katoh M."/>
            <person name="Nakazaki N."/>
            <person name="Nakayama S."/>
            <person name="Yamada M."/>
            <person name="Tabata S."/>
            <person name="Watanabe M.M."/>
        </authorList>
    </citation>
    <scope>NUCLEOTIDE SEQUENCE [LARGE SCALE GENOMIC DNA]</scope>
    <source>
        <strain>NIES-843 / IAM M-247</strain>
    </source>
</reference>
<comment type="function">
    <text evidence="1">Attaches a formyl group to the free amino group of methionyl-tRNA(fMet). The formyl group appears to play a dual role in the initiator identity of N-formylmethionyl-tRNA by promoting its recognition by IF2 and preventing the misappropriation of this tRNA by the elongation apparatus.</text>
</comment>
<comment type="catalytic activity">
    <reaction evidence="1">
        <text>L-methionyl-tRNA(fMet) + (6R)-10-formyltetrahydrofolate = N-formyl-L-methionyl-tRNA(fMet) + (6S)-5,6,7,8-tetrahydrofolate + H(+)</text>
        <dbReference type="Rhea" id="RHEA:24380"/>
        <dbReference type="Rhea" id="RHEA-COMP:9952"/>
        <dbReference type="Rhea" id="RHEA-COMP:9953"/>
        <dbReference type="ChEBI" id="CHEBI:15378"/>
        <dbReference type="ChEBI" id="CHEBI:57453"/>
        <dbReference type="ChEBI" id="CHEBI:78530"/>
        <dbReference type="ChEBI" id="CHEBI:78844"/>
        <dbReference type="ChEBI" id="CHEBI:195366"/>
        <dbReference type="EC" id="2.1.2.9"/>
    </reaction>
</comment>
<comment type="similarity">
    <text evidence="1">Belongs to the Fmt family.</text>
</comment>
<feature type="chain" id="PRO_1000077305" description="Methionyl-tRNA formyltransferase">
    <location>
        <begin position="1"/>
        <end position="325"/>
    </location>
</feature>
<feature type="binding site" evidence="1">
    <location>
        <begin position="111"/>
        <end position="114"/>
    </location>
    <ligand>
        <name>(6S)-5,6,7,8-tetrahydrofolate</name>
        <dbReference type="ChEBI" id="CHEBI:57453"/>
    </ligand>
</feature>
<sequence>MRIVFFGTPTFAVPTLKKLLANPDIEIITVVTQPDKRRGRGNQLIPSPVKQIAIEQQIPVLQPKSVKKNARTLDFLRQSRADAFVVVAYGQILSPEILEMPRLGCINVHGSILPKYRGAAPVQWCIARGEKETGITTMLMDAGMDTGPMLLKAYTPIALFDNAEQVGATLGQMGADLLLETLSKLDRAEITPIPQNNDDATYAPLIQKSDYLIHWQDSGRRIHDRVRGFYPHALTTFRGQPLKVMATIPLEDLGQLPPELQTKDLSHLSGEVGSIVALWKNFGPVVQTGEGLLLLKEVQLSGKSPRSGGDLVNGSRLTIGEIFVQ</sequence>
<accession>B0JY70</accession>
<evidence type="ECO:0000255" key="1">
    <source>
        <dbReference type="HAMAP-Rule" id="MF_00182"/>
    </source>
</evidence>
<gene>
    <name evidence="1" type="primary">fmt</name>
    <name type="ordered locus">MAE_52860</name>
</gene>
<protein>
    <recommendedName>
        <fullName evidence="1">Methionyl-tRNA formyltransferase</fullName>
        <ecNumber evidence="1">2.1.2.9</ecNumber>
    </recommendedName>
</protein>
<organism>
    <name type="scientific">Microcystis aeruginosa (strain NIES-843 / IAM M-2473)</name>
    <dbReference type="NCBI Taxonomy" id="449447"/>
    <lineage>
        <taxon>Bacteria</taxon>
        <taxon>Bacillati</taxon>
        <taxon>Cyanobacteriota</taxon>
        <taxon>Cyanophyceae</taxon>
        <taxon>Oscillatoriophycideae</taxon>
        <taxon>Chroococcales</taxon>
        <taxon>Microcystaceae</taxon>
        <taxon>Microcystis</taxon>
    </lineage>
</organism>
<keyword id="KW-0648">Protein biosynthesis</keyword>
<keyword id="KW-0808">Transferase</keyword>
<dbReference type="EC" id="2.1.2.9" evidence="1"/>
<dbReference type="EMBL" id="AP009552">
    <property type="protein sequence ID" value="BAG05108.1"/>
    <property type="molecule type" value="Genomic_DNA"/>
</dbReference>
<dbReference type="RefSeq" id="WP_012267648.1">
    <property type="nucleotide sequence ID" value="NC_010296.1"/>
</dbReference>
<dbReference type="SMR" id="B0JY70"/>
<dbReference type="STRING" id="449447.MAE_52860"/>
<dbReference type="PaxDb" id="449447-MAE_52860"/>
<dbReference type="EnsemblBacteria" id="BAG05108">
    <property type="protein sequence ID" value="BAG05108"/>
    <property type="gene ID" value="MAE_52860"/>
</dbReference>
<dbReference type="KEGG" id="mar:MAE_52860"/>
<dbReference type="PATRIC" id="fig|449447.4.peg.4815"/>
<dbReference type="eggNOG" id="COG0223">
    <property type="taxonomic scope" value="Bacteria"/>
</dbReference>
<dbReference type="HOGENOM" id="CLU_033347_1_1_3"/>
<dbReference type="BioCyc" id="MAER449447:MAE_RS23000-MONOMER"/>
<dbReference type="Proteomes" id="UP000001510">
    <property type="component" value="Chromosome"/>
</dbReference>
<dbReference type="GO" id="GO:0005829">
    <property type="term" value="C:cytosol"/>
    <property type="evidence" value="ECO:0007669"/>
    <property type="project" value="TreeGrafter"/>
</dbReference>
<dbReference type="GO" id="GO:0004479">
    <property type="term" value="F:methionyl-tRNA formyltransferase activity"/>
    <property type="evidence" value="ECO:0007669"/>
    <property type="project" value="UniProtKB-UniRule"/>
</dbReference>
<dbReference type="CDD" id="cd08646">
    <property type="entry name" value="FMT_core_Met-tRNA-FMT_N"/>
    <property type="match status" value="1"/>
</dbReference>
<dbReference type="CDD" id="cd08704">
    <property type="entry name" value="Met_tRNA_FMT_C"/>
    <property type="match status" value="1"/>
</dbReference>
<dbReference type="FunFam" id="3.40.50.12230:FF:000001">
    <property type="entry name" value="Methionyl-tRNA formyltransferase"/>
    <property type="match status" value="1"/>
</dbReference>
<dbReference type="Gene3D" id="3.40.50.12230">
    <property type="match status" value="1"/>
</dbReference>
<dbReference type="HAMAP" id="MF_00182">
    <property type="entry name" value="Formyl_trans"/>
    <property type="match status" value="1"/>
</dbReference>
<dbReference type="InterPro" id="IPR005794">
    <property type="entry name" value="Fmt"/>
</dbReference>
<dbReference type="InterPro" id="IPR005793">
    <property type="entry name" value="Formyl_trans_C"/>
</dbReference>
<dbReference type="InterPro" id="IPR002376">
    <property type="entry name" value="Formyl_transf_N"/>
</dbReference>
<dbReference type="InterPro" id="IPR036477">
    <property type="entry name" value="Formyl_transf_N_sf"/>
</dbReference>
<dbReference type="InterPro" id="IPR011034">
    <property type="entry name" value="Formyl_transferase-like_C_sf"/>
</dbReference>
<dbReference type="InterPro" id="IPR001555">
    <property type="entry name" value="GART_AS"/>
</dbReference>
<dbReference type="InterPro" id="IPR044135">
    <property type="entry name" value="Met-tRNA-FMT_C"/>
</dbReference>
<dbReference type="InterPro" id="IPR041711">
    <property type="entry name" value="Met-tRNA-FMT_N"/>
</dbReference>
<dbReference type="NCBIfam" id="TIGR00460">
    <property type="entry name" value="fmt"/>
    <property type="match status" value="1"/>
</dbReference>
<dbReference type="PANTHER" id="PTHR11138">
    <property type="entry name" value="METHIONYL-TRNA FORMYLTRANSFERASE"/>
    <property type="match status" value="1"/>
</dbReference>
<dbReference type="PANTHER" id="PTHR11138:SF5">
    <property type="entry name" value="METHIONYL-TRNA FORMYLTRANSFERASE, MITOCHONDRIAL"/>
    <property type="match status" value="1"/>
</dbReference>
<dbReference type="Pfam" id="PF02911">
    <property type="entry name" value="Formyl_trans_C"/>
    <property type="match status" value="1"/>
</dbReference>
<dbReference type="Pfam" id="PF00551">
    <property type="entry name" value="Formyl_trans_N"/>
    <property type="match status" value="1"/>
</dbReference>
<dbReference type="SUPFAM" id="SSF50486">
    <property type="entry name" value="FMT C-terminal domain-like"/>
    <property type="match status" value="1"/>
</dbReference>
<dbReference type="SUPFAM" id="SSF53328">
    <property type="entry name" value="Formyltransferase"/>
    <property type="match status" value="1"/>
</dbReference>
<dbReference type="PROSITE" id="PS00373">
    <property type="entry name" value="GART"/>
    <property type="match status" value="1"/>
</dbReference>
<proteinExistence type="inferred from homology"/>
<name>FMT_MICAN</name>